<evidence type="ECO:0000255" key="1">
    <source>
        <dbReference type="HAMAP-Rule" id="MF_00504"/>
    </source>
</evidence>
<feature type="chain" id="PRO_1000127015" description="Peptidase B">
    <location>
        <begin position="1"/>
        <end position="427"/>
    </location>
</feature>
<feature type="active site" evidence="1">
    <location>
        <position position="207"/>
    </location>
</feature>
<feature type="active site" evidence="1">
    <location>
        <position position="281"/>
    </location>
</feature>
<feature type="binding site" evidence="1">
    <location>
        <position position="195"/>
    </location>
    <ligand>
        <name>Mn(2+)</name>
        <dbReference type="ChEBI" id="CHEBI:29035"/>
        <label>2</label>
    </ligand>
</feature>
<feature type="binding site" evidence="1">
    <location>
        <position position="200"/>
    </location>
    <ligand>
        <name>Mn(2+)</name>
        <dbReference type="ChEBI" id="CHEBI:29035"/>
        <label>1</label>
    </ligand>
</feature>
<feature type="binding site" evidence="1">
    <location>
        <position position="200"/>
    </location>
    <ligand>
        <name>Mn(2+)</name>
        <dbReference type="ChEBI" id="CHEBI:29035"/>
        <label>2</label>
    </ligand>
</feature>
<feature type="binding site" evidence="1">
    <location>
        <position position="218"/>
    </location>
    <ligand>
        <name>Mn(2+)</name>
        <dbReference type="ChEBI" id="CHEBI:29035"/>
        <label>2</label>
    </ligand>
</feature>
<feature type="binding site" evidence="1">
    <location>
        <position position="277"/>
    </location>
    <ligand>
        <name>Mn(2+)</name>
        <dbReference type="ChEBI" id="CHEBI:29035"/>
        <label>1</label>
    </ligand>
</feature>
<feature type="binding site" evidence="1">
    <location>
        <position position="279"/>
    </location>
    <ligand>
        <name>Mn(2+)</name>
        <dbReference type="ChEBI" id="CHEBI:29035"/>
        <label>1</label>
    </ligand>
</feature>
<feature type="binding site" evidence="1">
    <location>
        <position position="279"/>
    </location>
    <ligand>
        <name>Mn(2+)</name>
        <dbReference type="ChEBI" id="CHEBI:29035"/>
        <label>2</label>
    </ligand>
</feature>
<keyword id="KW-0031">Aminopeptidase</keyword>
<keyword id="KW-0963">Cytoplasm</keyword>
<keyword id="KW-0378">Hydrolase</keyword>
<keyword id="KW-0464">Manganese</keyword>
<keyword id="KW-0479">Metal-binding</keyword>
<keyword id="KW-0645">Protease</keyword>
<accession>B5RD05</accession>
<protein>
    <recommendedName>
        <fullName evidence="1">Peptidase B</fullName>
        <ecNumber evidence="1">3.4.11.23</ecNumber>
    </recommendedName>
    <alternativeName>
        <fullName evidence="1">Aminopeptidase B</fullName>
    </alternativeName>
</protein>
<comment type="function">
    <text evidence="1">Probably plays an important role in intracellular peptide degradation.</text>
</comment>
<comment type="catalytic activity">
    <reaction evidence="1">
        <text>Release of an N-terminal amino acid, Xaa, from a peptide or arylamide. Xaa is preferably Glu or Asp but may be other amino acids, including Leu, Met, His, Cys and Gln.</text>
        <dbReference type="EC" id="3.4.11.23"/>
    </reaction>
</comment>
<comment type="cofactor">
    <cofactor evidence="1">
        <name>Mn(2+)</name>
        <dbReference type="ChEBI" id="CHEBI:29035"/>
    </cofactor>
    <text evidence="1">Binds 2 manganese ions per subunit.</text>
</comment>
<comment type="subunit">
    <text evidence="1">Homohexamer.</text>
</comment>
<comment type="subcellular location">
    <subcellularLocation>
        <location evidence="1">Cytoplasm</location>
    </subcellularLocation>
</comment>
<comment type="similarity">
    <text evidence="1">Belongs to the peptidase M17 family.</text>
</comment>
<dbReference type="EC" id="3.4.11.23" evidence="1"/>
<dbReference type="EMBL" id="AM933173">
    <property type="protein sequence ID" value="CAR38391.1"/>
    <property type="molecule type" value="Genomic_DNA"/>
</dbReference>
<dbReference type="RefSeq" id="WP_000133534.1">
    <property type="nucleotide sequence ID" value="NC_011274.1"/>
</dbReference>
<dbReference type="SMR" id="B5RD05"/>
<dbReference type="MEROPS" id="M17.004"/>
<dbReference type="KEGG" id="seg:SG2571"/>
<dbReference type="HOGENOM" id="CLU_013734_7_1_6"/>
<dbReference type="Proteomes" id="UP000008321">
    <property type="component" value="Chromosome"/>
</dbReference>
<dbReference type="GO" id="GO:0005737">
    <property type="term" value="C:cytoplasm"/>
    <property type="evidence" value="ECO:0007669"/>
    <property type="project" value="UniProtKB-SubCell"/>
</dbReference>
<dbReference type="GO" id="GO:0030145">
    <property type="term" value="F:manganese ion binding"/>
    <property type="evidence" value="ECO:0007669"/>
    <property type="project" value="UniProtKB-UniRule"/>
</dbReference>
<dbReference type="GO" id="GO:0070006">
    <property type="term" value="F:metalloaminopeptidase activity"/>
    <property type="evidence" value="ECO:0007669"/>
    <property type="project" value="InterPro"/>
</dbReference>
<dbReference type="GO" id="GO:0006508">
    <property type="term" value="P:proteolysis"/>
    <property type="evidence" value="ECO:0007669"/>
    <property type="project" value="UniProtKB-UniRule"/>
</dbReference>
<dbReference type="CDD" id="cd00433">
    <property type="entry name" value="Peptidase_M17"/>
    <property type="match status" value="1"/>
</dbReference>
<dbReference type="FunFam" id="3.40.630.10:FF:000037">
    <property type="entry name" value="Peptidase B"/>
    <property type="match status" value="1"/>
</dbReference>
<dbReference type="Gene3D" id="3.40.630.10">
    <property type="entry name" value="Zn peptidases"/>
    <property type="match status" value="1"/>
</dbReference>
<dbReference type="HAMAP" id="MF_00504">
    <property type="entry name" value="Aminopeptidase_M17"/>
    <property type="match status" value="1"/>
</dbReference>
<dbReference type="InterPro" id="IPR011356">
    <property type="entry name" value="Leucine_aapep/pepB"/>
</dbReference>
<dbReference type="InterPro" id="IPR047620">
    <property type="entry name" value="M17_PepB-like_N"/>
</dbReference>
<dbReference type="InterPro" id="IPR008330">
    <property type="entry name" value="Pept_M17_PepB"/>
</dbReference>
<dbReference type="InterPro" id="IPR000819">
    <property type="entry name" value="Peptidase_M17_C"/>
</dbReference>
<dbReference type="NCBIfam" id="NF003450">
    <property type="entry name" value="PRK05015.1"/>
    <property type="match status" value="1"/>
</dbReference>
<dbReference type="PANTHER" id="PTHR11963">
    <property type="entry name" value="LEUCINE AMINOPEPTIDASE-RELATED"/>
    <property type="match status" value="1"/>
</dbReference>
<dbReference type="PANTHER" id="PTHR11963:SF20">
    <property type="entry name" value="PEPTIDASE B"/>
    <property type="match status" value="1"/>
</dbReference>
<dbReference type="Pfam" id="PF12404">
    <property type="entry name" value="DUF3663"/>
    <property type="match status" value="1"/>
</dbReference>
<dbReference type="Pfam" id="PF00883">
    <property type="entry name" value="Peptidase_M17"/>
    <property type="match status" value="1"/>
</dbReference>
<dbReference type="PIRSF" id="PIRSF036388">
    <property type="entry name" value="Ctsl_amnpptdse_B"/>
    <property type="match status" value="1"/>
</dbReference>
<dbReference type="PRINTS" id="PR00481">
    <property type="entry name" value="LAMNOPPTDASE"/>
</dbReference>
<dbReference type="SUPFAM" id="SSF53187">
    <property type="entry name" value="Zn-dependent exopeptidases"/>
    <property type="match status" value="1"/>
</dbReference>
<dbReference type="PROSITE" id="PS00631">
    <property type="entry name" value="CYTOSOL_AP"/>
    <property type="match status" value="1"/>
</dbReference>
<gene>
    <name evidence="1" type="primary">pepB</name>
    <name type="ordered locus">SG2571</name>
</gene>
<sequence length="427" mass="46368">MTEAMKITLSTQPADARWGDKATYSINNDGITLHLNGKDDLGLIQRAARKIDGLGIKQVALTGEGWDIERCWAFWAGYKGPKGVRTVMWPDLDDAQRQELDNRLTIIDWVRDTINAPAEELGPEQLAQRAVDLLCSVACDSVTYRITKGEDLREQNYMGLHTVGRGSERPPVLLALDYNPTGDKDAPVYACLVGKGITFDSGGYSIKQSAFMDSMKSDMGGAATVTGALAFAITRGLNKRVKLFLCCADNLISGNAFKLGDIIRYRNGKNVEVMNTDAEGRLVLADGLIDASAQHPELIIDMATLTGAAKTALGNDYHALFSFDDTLAGRLLTSAAQENEPFWRLPLAEFHRNQLPSNFAELNNTGSAAYPAGASTAAGFLSHFVENYREGWLHIDCSATYRKAPVEQWAAGATGLGVRTIANLLTA</sequence>
<proteinExistence type="inferred from homology"/>
<name>PEPB_SALG2</name>
<reference key="1">
    <citation type="journal article" date="2008" name="Genome Res.">
        <title>Comparative genome analysis of Salmonella enteritidis PT4 and Salmonella gallinarum 287/91 provides insights into evolutionary and host adaptation pathways.</title>
        <authorList>
            <person name="Thomson N.R."/>
            <person name="Clayton D.J."/>
            <person name="Windhorst D."/>
            <person name="Vernikos G."/>
            <person name="Davidson S."/>
            <person name="Churcher C."/>
            <person name="Quail M.A."/>
            <person name="Stevens M."/>
            <person name="Jones M.A."/>
            <person name="Watson M."/>
            <person name="Barron A."/>
            <person name="Layton A."/>
            <person name="Pickard D."/>
            <person name="Kingsley R.A."/>
            <person name="Bignell A."/>
            <person name="Clark L."/>
            <person name="Harris B."/>
            <person name="Ormond D."/>
            <person name="Abdellah Z."/>
            <person name="Brooks K."/>
            <person name="Cherevach I."/>
            <person name="Chillingworth T."/>
            <person name="Woodward J."/>
            <person name="Norberczak H."/>
            <person name="Lord A."/>
            <person name="Arrowsmith C."/>
            <person name="Jagels K."/>
            <person name="Moule S."/>
            <person name="Mungall K."/>
            <person name="Saunders M."/>
            <person name="Whitehead S."/>
            <person name="Chabalgoity J.A."/>
            <person name="Maskell D."/>
            <person name="Humphreys T."/>
            <person name="Roberts M."/>
            <person name="Barrow P.A."/>
            <person name="Dougan G."/>
            <person name="Parkhill J."/>
        </authorList>
    </citation>
    <scope>NUCLEOTIDE SEQUENCE [LARGE SCALE GENOMIC DNA]</scope>
    <source>
        <strain>287/91 / NCTC 13346</strain>
    </source>
</reference>
<organism>
    <name type="scientific">Salmonella gallinarum (strain 287/91 / NCTC 13346)</name>
    <dbReference type="NCBI Taxonomy" id="550538"/>
    <lineage>
        <taxon>Bacteria</taxon>
        <taxon>Pseudomonadati</taxon>
        <taxon>Pseudomonadota</taxon>
        <taxon>Gammaproteobacteria</taxon>
        <taxon>Enterobacterales</taxon>
        <taxon>Enterobacteriaceae</taxon>
        <taxon>Salmonella</taxon>
    </lineage>
</organism>